<protein>
    <recommendedName>
        <fullName evidence="1">Polyribonucleotide nucleotidyltransferase</fullName>
        <ecNumber evidence="1">2.7.7.8</ecNumber>
    </recommendedName>
    <alternativeName>
        <fullName evidence="1">Polynucleotide phosphorylase</fullName>
        <shortName evidence="1">PNPase</shortName>
    </alternativeName>
</protein>
<keyword id="KW-0963">Cytoplasm</keyword>
<keyword id="KW-0460">Magnesium</keyword>
<keyword id="KW-0479">Metal-binding</keyword>
<keyword id="KW-0548">Nucleotidyltransferase</keyword>
<keyword id="KW-1185">Reference proteome</keyword>
<keyword id="KW-0694">RNA-binding</keyword>
<keyword id="KW-0808">Transferase</keyword>
<proteinExistence type="inferred from homology"/>
<reference key="1">
    <citation type="submission" date="2003-10" db="EMBL/GenBank/DDBJ databases">
        <title>The complete genome sequence of the alkaliphilic Bacillus clausii KSM-K16.</title>
        <authorList>
            <person name="Takaki Y."/>
            <person name="Kageyama Y."/>
            <person name="Shimamura S."/>
            <person name="Suzuki H."/>
            <person name="Nishi S."/>
            <person name="Hatada Y."/>
            <person name="Kawai S."/>
            <person name="Ito S."/>
            <person name="Horikoshi K."/>
        </authorList>
    </citation>
    <scope>NUCLEOTIDE SEQUENCE [LARGE SCALE GENOMIC DNA]</scope>
    <source>
        <strain>KSM-K16</strain>
    </source>
</reference>
<feature type="chain" id="PRO_0000329516" description="Polyribonucleotide nucleotidyltransferase">
    <location>
        <begin position="1"/>
        <end position="710"/>
    </location>
</feature>
<feature type="domain" description="KH" evidence="1">
    <location>
        <begin position="552"/>
        <end position="611"/>
    </location>
</feature>
<feature type="domain" description="S1 motif" evidence="1">
    <location>
        <begin position="621"/>
        <end position="689"/>
    </location>
</feature>
<feature type="binding site" evidence="1">
    <location>
        <position position="485"/>
    </location>
    <ligand>
        <name>Mg(2+)</name>
        <dbReference type="ChEBI" id="CHEBI:18420"/>
    </ligand>
</feature>
<feature type="binding site" evidence="1">
    <location>
        <position position="491"/>
    </location>
    <ligand>
        <name>Mg(2+)</name>
        <dbReference type="ChEBI" id="CHEBI:18420"/>
    </ligand>
</feature>
<organism>
    <name type="scientific">Shouchella clausii (strain KSM-K16)</name>
    <name type="common">Alkalihalobacillus clausii</name>
    <dbReference type="NCBI Taxonomy" id="66692"/>
    <lineage>
        <taxon>Bacteria</taxon>
        <taxon>Bacillati</taxon>
        <taxon>Bacillota</taxon>
        <taxon>Bacilli</taxon>
        <taxon>Bacillales</taxon>
        <taxon>Bacillaceae</taxon>
        <taxon>Shouchella</taxon>
    </lineage>
</organism>
<name>PNP_SHOC1</name>
<accession>Q5WFU8</accession>
<sequence>MDQERHEFSIDWAGRTLSVEVGQLAKQANGAVLVRYGDTAVLSTATASKEPKDLPFFPLTVNYEERLYAAGKIPGGFIKREGRPSERAILTSRLIDRPIRPLFPDGFRNDVQVISIVMSSDQDASPEMAAMIGSSLALCVSDIPFEGPIAGVTVGRINGEFIMNPTPAQLAESDIDLTVAGTKEAINMVEAGAKEVPEDVMLEAILAGHENIKKMIAFQEKVVEVCGKEKREVQLKTFDAELEARLRESAEASIKEAVRIAEKHARQDAIDEIIAAQVEQHSDDDSINVDEVKEILQMFVKEEVRRLITVEKIRPDGRGVDEIRPLSSQIKLLPRTHGSGLFTRGQTQALSVCTLGALGDVQVLDGLGIEETKRFMHHYNFPQFSVGETGPIRAPGRREIGHGALGERALEQVIPSEQEFPYTIRLVSEVLESNGSTSQASICASTLAMMDAGVPIKAPVAGIAMGLVKQGEHMTVLTDIQGMEDALGDMDFKVAGTANGVTALQMDIKISGINREVLEQALEQAKQGRMKILSNMMEAIDKPRAELSEYAPKILTLTINPDKIRDVIGPSGKVINKIIEETGVKIDIEQDGTVYISSLDTAMNQKAKQIIEDLVREVQVGETYHGKVKRIEKFGAFVELFKGKDGLLHISQIAEERINKVEDVFKLGDEVDVRVTEIDNQGRVNLSRKVLLKEQREKLEKEEAKDTANE</sequence>
<gene>
    <name evidence="1" type="primary">pnp</name>
    <name type="ordered locus">ABC2222</name>
</gene>
<comment type="function">
    <text evidence="1">Involved in mRNA degradation. Catalyzes the phosphorolysis of single-stranded polyribonucleotides processively in the 3'- to 5'-direction.</text>
</comment>
<comment type="catalytic activity">
    <reaction evidence="1">
        <text>RNA(n+1) + phosphate = RNA(n) + a ribonucleoside 5'-diphosphate</text>
        <dbReference type="Rhea" id="RHEA:22096"/>
        <dbReference type="Rhea" id="RHEA-COMP:14527"/>
        <dbReference type="Rhea" id="RHEA-COMP:17342"/>
        <dbReference type="ChEBI" id="CHEBI:43474"/>
        <dbReference type="ChEBI" id="CHEBI:57930"/>
        <dbReference type="ChEBI" id="CHEBI:140395"/>
        <dbReference type="EC" id="2.7.7.8"/>
    </reaction>
</comment>
<comment type="cofactor">
    <cofactor evidence="1">
        <name>Mg(2+)</name>
        <dbReference type="ChEBI" id="CHEBI:18420"/>
    </cofactor>
</comment>
<comment type="subcellular location">
    <subcellularLocation>
        <location evidence="1">Cytoplasm</location>
    </subcellularLocation>
</comment>
<comment type="similarity">
    <text evidence="1">Belongs to the polyribonucleotide nucleotidyltransferase family.</text>
</comment>
<evidence type="ECO:0000255" key="1">
    <source>
        <dbReference type="HAMAP-Rule" id="MF_01595"/>
    </source>
</evidence>
<dbReference type="EC" id="2.7.7.8" evidence="1"/>
<dbReference type="EMBL" id="AP006627">
    <property type="protein sequence ID" value="BAD64757.1"/>
    <property type="molecule type" value="Genomic_DNA"/>
</dbReference>
<dbReference type="RefSeq" id="WP_011247065.1">
    <property type="nucleotide sequence ID" value="NC_006582.1"/>
</dbReference>
<dbReference type="SMR" id="Q5WFU8"/>
<dbReference type="STRING" id="66692.ABC2222"/>
<dbReference type="KEGG" id="bcl:ABC2222"/>
<dbReference type="eggNOG" id="COG1185">
    <property type="taxonomic scope" value="Bacteria"/>
</dbReference>
<dbReference type="HOGENOM" id="CLU_004217_2_2_9"/>
<dbReference type="OrthoDB" id="9804305at2"/>
<dbReference type="Proteomes" id="UP000001168">
    <property type="component" value="Chromosome"/>
</dbReference>
<dbReference type="GO" id="GO:0005829">
    <property type="term" value="C:cytosol"/>
    <property type="evidence" value="ECO:0007669"/>
    <property type="project" value="TreeGrafter"/>
</dbReference>
<dbReference type="GO" id="GO:0000175">
    <property type="term" value="F:3'-5'-RNA exonuclease activity"/>
    <property type="evidence" value="ECO:0007669"/>
    <property type="project" value="TreeGrafter"/>
</dbReference>
<dbReference type="GO" id="GO:0000287">
    <property type="term" value="F:magnesium ion binding"/>
    <property type="evidence" value="ECO:0007669"/>
    <property type="project" value="UniProtKB-UniRule"/>
</dbReference>
<dbReference type="GO" id="GO:0004654">
    <property type="term" value="F:polyribonucleotide nucleotidyltransferase activity"/>
    <property type="evidence" value="ECO:0007669"/>
    <property type="project" value="UniProtKB-UniRule"/>
</dbReference>
<dbReference type="GO" id="GO:0003723">
    <property type="term" value="F:RNA binding"/>
    <property type="evidence" value="ECO:0007669"/>
    <property type="project" value="UniProtKB-UniRule"/>
</dbReference>
<dbReference type="GO" id="GO:0006402">
    <property type="term" value="P:mRNA catabolic process"/>
    <property type="evidence" value="ECO:0007669"/>
    <property type="project" value="UniProtKB-UniRule"/>
</dbReference>
<dbReference type="GO" id="GO:0006396">
    <property type="term" value="P:RNA processing"/>
    <property type="evidence" value="ECO:0007669"/>
    <property type="project" value="InterPro"/>
</dbReference>
<dbReference type="CDD" id="cd02393">
    <property type="entry name" value="KH-I_PNPase"/>
    <property type="match status" value="1"/>
</dbReference>
<dbReference type="CDD" id="cd11363">
    <property type="entry name" value="RNase_PH_PNPase_1"/>
    <property type="match status" value="1"/>
</dbReference>
<dbReference type="CDD" id="cd11364">
    <property type="entry name" value="RNase_PH_PNPase_2"/>
    <property type="match status" value="1"/>
</dbReference>
<dbReference type="CDD" id="cd04472">
    <property type="entry name" value="S1_PNPase"/>
    <property type="match status" value="1"/>
</dbReference>
<dbReference type="FunFam" id="2.40.50.140:FF:000023">
    <property type="entry name" value="Polyribonucleotide nucleotidyltransferase"/>
    <property type="match status" value="1"/>
</dbReference>
<dbReference type="FunFam" id="3.30.1370.10:FF:000001">
    <property type="entry name" value="Polyribonucleotide nucleotidyltransferase"/>
    <property type="match status" value="1"/>
</dbReference>
<dbReference type="FunFam" id="3.30.230.70:FF:000001">
    <property type="entry name" value="Polyribonucleotide nucleotidyltransferase"/>
    <property type="match status" value="1"/>
</dbReference>
<dbReference type="FunFam" id="3.30.230.70:FF:000002">
    <property type="entry name" value="Polyribonucleotide nucleotidyltransferase"/>
    <property type="match status" value="1"/>
</dbReference>
<dbReference type="Gene3D" id="3.30.230.70">
    <property type="entry name" value="GHMP Kinase, N-terminal domain"/>
    <property type="match status" value="2"/>
</dbReference>
<dbReference type="Gene3D" id="3.30.1370.10">
    <property type="entry name" value="K Homology domain, type 1"/>
    <property type="match status" value="1"/>
</dbReference>
<dbReference type="Gene3D" id="2.40.50.140">
    <property type="entry name" value="Nucleic acid-binding proteins"/>
    <property type="match status" value="1"/>
</dbReference>
<dbReference type="HAMAP" id="MF_01595">
    <property type="entry name" value="PNPase"/>
    <property type="match status" value="1"/>
</dbReference>
<dbReference type="InterPro" id="IPR001247">
    <property type="entry name" value="ExoRNase_PH_dom1"/>
</dbReference>
<dbReference type="InterPro" id="IPR015847">
    <property type="entry name" value="ExoRNase_PH_dom2"/>
</dbReference>
<dbReference type="InterPro" id="IPR036345">
    <property type="entry name" value="ExoRNase_PH_dom2_sf"/>
</dbReference>
<dbReference type="InterPro" id="IPR004087">
    <property type="entry name" value="KH_dom"/>
</dbReference>
<dbReference type="InterPro" id="IPR004088">
    <property type="entry name" value="KH_dom_type_1"/>
</dbReference>
<dbReference type="InterPro" id="IPR036612">
    <property type="entry name" value="KH_dom_type_1_sf"/>
</dbReference>
<dbReference type="InterPro" id="IPR012340">
    <property type="entry name" value="NA-bd_OB-fold"/>
</dbReference>
<dbReference type="InterPro" id="IPR012162">
    <property type="entry name" value="PNPase"/>
</dbReference>
<dbReference type="InterPro" id="IPR027408">
    <property type="entry name" value="PNPase/RNase_PH_dom_sf"/>
</dbReference>
<dbReference type="InterPro" id="IPR015848">
    <property type="entry name" value="PNPase_PH_RNA-bd_bac/org-type"/>
</dbReference>
<dbReference type="InterPro" id="IPR020568">
    <property type="entry name" value="Ribosomal_Su5_D2-typ_SF"/>
</dbReference>
<dbReference type="InterPro" id="IPR003029">
    <property type="entry name" value="S1_domain"/>
</dbReference>
<dbReference type="NCBIfam" id="TIGR03591">
    <property type="entry name" value="polynuc_phos"/>
    <property type="match status" value="1"/>
</dbReference>
<dbReference type="NCBIfam" id="NF008805">
    <property type="entry name" value="PRK11824.1"/>
    <property type="match status" value="1"/>
</dbReference>
<dbReference type="PANTHER" id="PTHR11252">
    <property type="entry name" value="POLYRIBONUCLEOTIDE NUCLEOTIDYLTRANSFERASE"/>
    <property type="match status" value="1"/>
</dbReference>
<dbReference type="PANTHER" id="PTHR11252:SF0">
    <property type="entry name" value="POLYRIBONUCLEOTIDE NUCLEOTIDYLTRANSFERASE 1, MITOCHONDRIAL"/>
    <property type="match status" value="1"/>
</dbReference>
<dbReference type="Pfam" id="PF00013">
    <property type="entry name" value="KH_1"/>
    <property type="match status" value="1"/>
</dbReference>
<dbReference type="Pfam" id="PF03726">
    <property type="entry name" value="PNPase"/>
    <property type="match status" value="1"/>
</dbReference>
<dbReference type="Pfam" id="PF01138">
    <property type="entry name" value="RNase_PH"/>
    <property type="match status" value="2"/>
</dbReference>
<dbReference type="Pfam" id="PF03725">
    <property type="entry name" value="RNase_PH_C"/>
    <property type="match status" value="2"/>
</dbReference>
<dbReference type="Pfam" id="PF00575">
    <property type="entry name" value="S1"/>
    <property type="match status" value="1"/>
</dbReference>
<dbReference type="PIRSF" id="PIRSF005499">
    <property type="entry name" value="PNPase"/>
    <property type="match status" value="1"/>
</dbReference>
<dbReference type="SMART" id="SM00322">
    <property type="entry name" value="KH"/>
    <property type="match status" value="1"/>
</dbReference>
<dbReference type="SMART" id="SM00316">
    <property type="entry name" value="S1"/>
    <property type="match status" value="1"/>
</dbReference>
<dbReference type="SUPFAM" id="SSF54791">
    <property type="entry name" value="Eukaryotic type KH-domain (KH-domain type I)"/>
    <property type="match status" value="1"/>
</dbReference>
<dbReference type="SUPFAM" id="SSF50249">
    <property type="entry name" value="Nucleic acid-binding proteins"/>
    <property type="match status" value="1"/>
</dbReference>
<dbReference type="SUPFAM" id="SSF55666">
    <property type="entry name" value="Ribonuclease PH domain 2-like"/>
    <property type="match status" value="2"/>
</dbReference>
<dbReference type="SUPFAM" id="SSF54211">
    <property type="entry name" value="Ribosomal protein S5 domain 2-like"/>
    <property type="match status" value="2"/>
</dbReference>
<dbReference type="PROSITE" id="PS50084">
    <property type="entry name" value="KH_TYPE_1"/>
    <property type="match status" value="1"/>
</dbReference>
<dbReference type="PROSITE" id="PS50126">
    <property type="entry name" value="S1"/>
    <property type="match status" value="1"/>
</dbReference>